<proteinExistence type="evidence at protein level"/>
<protein>
    <recommendedName>
        <fullName>Alpha-ketoglutaric semialdehyde dehydrogenase</fullName>
        <shortName>alphaKGSA dehydrogenase</shortName>
        <ecNumber>1.2.1.26</ecNumber>
    </recommendedName>
    <alternativeName>
        <fullName>2,5-dioxovalerate dehydrogenase</fullName>
    </alternativeName>
</protein>
<keyword id="KW-0521">NADP</keyword>
<keyword id="KW-0560">Oxidoreductase</keyword>
<gene>
    <name type="ordered locus">ACIAD0131</name>
</gene>
<feature type="chain" id="PRO_0000424018" description="Alpha-ketoglutaric semialdehyde dehydrogenase">
    <location>
        <begin position="1"/>
        <end position="526"/>
    </location>
</feature>
<feature type="active site" description="Proton acceptor" evidence="1">
    <location>
        <position position="264"/>
    </location>
</feature>
<feature type="active site" description="Nucleophile" evidence="1">
    <location>
        <position position="301"/>
    </location>
</feature>
<feature type="binding site" evidence="1">
    <location>
        <begin position="159"/>
        <end position="160"/>
    </location>
    <ligand>
        <name>NADP(+)</name>
        <dbReference type="ChEBI" id="CHEBI:58349"/>
    </ligand>
</feature>
<feature type="binding site" evidence="1">
    <location>
        <begin position="185"/>
        <end position="188"/>
    </location>
    <ligand>
        <name>NADP(+)</name>
        <dbReference type="ChEBI" id="CHEBI:58349"/>
    </ligand>
</feature>
<feature type="binding site" evidence="1">
    <location>
        <begin position="240"/>
        <end position="241"/>
    </location>
    <ligand>
        <name>NADP(+)</name>
        <dbReference type="ChEBI" id="CHEBI:58349"/>
    </ligand>
</feature>
<feature type="binding site" evidence="1">
    <location>
        <position position="393"/>
    </location>
    <ligand>
        <name>NADP(+)</name>
        <dbReference type="ChEBI" id="CHEBI:58349"/>
    </ligand>
</feature>
<dbReference type="EC" id="1.2.1.26"/>
<dbReference type="EMBL" id="CR543861">
    <property type="protein sequence ID" value="CAG67107.1"/>
    <property type="molecule type" value="Genomic_DNA"/>
</dbReference>
<dbReference type="RefSeq" id="WP_004930669.1">
    <property type="nucleotide sequence ID" value="NC_005966.1"/>
</dbReference>
<dbReference type="SMR" id="Q6FFQ0"/>
<dbReference type="STRING" id="202950.GCA_001485005_01869"/>
<dbReference type="GeneID" id="45232653"/>
<dbReference type="KEGG" id="aci:ACIAD0131"/>
<dbReference type="eggNOG" id="COG1012">
    <property type="taxonomic scope" value="Bacteria"/>
</dbReference>
<dbReference type="HOGENOM" id="CLU_027555_0_0_6"/>
<dbReference type="OrthoDB" id="9770537at2"/>
<dbReference type="BioCyc" id="ASP62977:ACIAD_RS00615-MONOMER"/>
<dbReference type="BioCyc" id="MetaCyc:MONOMER-15626"/>
<dbReference type="BRENDA" id="1.2.1.26">
    <property type="organism ID" value="8909"/>
</dbReference>
<dbReference type="SABIO-RK" id="Q6FFQ0"/>
<dbReference type="UniPathway" id="UPA00564"/>
<dbReference type="Proteomes" id="UP000000430">
    <property type="component" value="Chromosome"/>
</dbReference>
<dbReference type="GO" id="GO:0047533">
    <property type="term" value="F:2,5-dioxovalerate dehydrogenase (NADP+) activity"/>
    <property type="evidence" value="ECO:0007669"/>
    <property type="project" value="UniProtKB-EC"/>
</dbReference>
<dbReference type="GO" id="GO:0042838">
    <property type="term" value="P:D-glucarate catabolic process"/>
    <property type="evidence" value="ECO:0007669"/>
    <property type="project" value="UniProtKB-UniPathway"/>
</dbReference>
<dbReference type="CDD" id="cd07129">
    <property type="entry name" value="ALDH_KGSADH"/>
    <property type="match status" value="1"/>
</dbReference>
<dbReference type="Gene3D" id="3.40.605.10">
    <property type="entry name" value="Aldehyde Dehydrogenase, Chain A, domain 1"/>
    <property type="match status" value="1"/>
</dbReference>
<dbReference type="Gene3D" id="3.40.309.10">
    <property type="entry name" value="Aldehyde Dehydrogenase, Chain A, domain 2"/>
    <property type="match status" value="1"/>
</dbReference>
<dbReference type="InterPro" id="IPR016161">
    <property type="entry name" value="Ald_DH/histidinol_DH"/>
</dbReference>
<dbReference type="InterPro" id="IPR016163">
    <property type="entry name" value="Ald_DH_C"/>
</dbReference>
<dbReference type="InterPro" id="IPR016162">
    <property type="entry name" value="Ald_DH_N"/>
</dbReference>
<dbReference type="InterPro" id="IPR015590">
    <property type="entry name" value="Aldehyde_DH_dom"/>
</dbReference>
<dbReference type="InterPro" id="IPR050740">
    <property type="entry name" value="Aldehyde_DH_Superfamily"/>
</dbReference>
<dbReference type="InterPro" id="IPR044151">
    <property type="entry name" value="ALDH_KGSADH"/>
</dbReference>
<dbReference type="PANTHER" id="PTHR43353:SF3">
    <property type="entry name" value="ALDEHYDE DEHYDROGENASE-RELATED"/>
    <property type="match status" value="1"/>
</dbReference>
<dbReference type="PANTHER" id="PTHR43353">
    <property type="entry name" value="SUCCINATE-SEMIALDEHYDE DEHYDROGENASE, MITOCHONDRIAL"/>
    <property type="match status" value="1"/>
</dbReference>
<dbReference type="Pfam" id="PF00171">
    <property type="entry name" value="Aldedh"/>
    <property type="match status" value="1"/>
</dbReference>
<dbReference type="SUPFAM" id="SSF53720">
    <property type="entry name" value="ALDH-like"/>
    <property type="match status" value="1"/>
</dbReference>
<organism>
    <name type="scientific">Acinetobacter baylyi (strain ATCC 33305 / BD413 / ADP1)</name>
    <dbReference type="NCBI Taxonomy" id="62977"/>
    <lineage>
        <taxon>Bacteria</taxon>
        <taxon>Pseudomonadati</taxon>
        <taxon>Pseudomonadota</taxon>
        <taxon>Gammaproteobacteria</taxon>
        <taxon>Moraxellales</taxon>
        <taxon>Moraxellaceae</taxon>
        <taxon>Acinetobacter</taxon>
    </lineage>
</organism>
<accession>Q6FFQ0</accession>
<comment type="function">
    <text evidence="2">Catalyzes the NAD(P)(+)-dependent oxidation of alpha-ketoglutaric semialdehyde (alphaKGSA) to alpha-ketoglutarate in the D-glutarate degradation pathway.</text>
</comment>
<comment type="catalytic activity">
    <reaction evidence="2">
        <text>2,5-dioxopentanoate + NADP(+) + H2O = 2-oxoglutarate + NADPH + 2 H(+)</text>
        <dbReference type="Rhea" id="RHEA:11296"/>
        <dbReference type="ChEBI" id="CHEBI:15377"/>
        <dbReference type="ChEBI" id="CHEBI:15378"/>
        <dbReference type="ChEBI" id="CHEBI:16810"/>
        <dbReference type="ChEBI" id="CHEBI:57783"/>
        <dbReference type="ChEBI" id="CHEBI:58136"/>
        <dbReference type="ChEBI" id="CHEBI:58349"/>
        <dbReference type="EC" id="1.2.1.26"/>
    </reaction>
</comment>
<comment type="pathway">
    <text evidence="2">Carbohydrate acid metabolism; D-glucarate degradation.</text>
</comment>
<comment type="similarity">
    <text evidence="3">Belongs to the aldehyde dehydrogenase family.</text>
</comment>
<name>KGSDH_ACIAD</name>
<reference key="1">
    <citation type="journal article" date="2004" name="Nucleic Acids Res.">
        <title>Unique features revealed by the genome sequence of Acinetobacter sp. ADP1, a versatile and naturally transformation competent bacterium.</title>
        <authorList>
            <person name="Barbe V."/>
            <person name="Vallenet D."/>
            <person name="Fonknechten N."/>
            <person name="Kreimeyer A."/>
            <person name="Oztas S."/>
            <person name="Labarre L."/>
            <person name="Cruveiller S."/>
            <person name="Robert C."/>
            <person name="Duprat S."/>
            <person name="Wincker P."/>
            <person name="Ornston L.N."/>
            <person name="Weissenbach J."/>
            <person name="Marliere P."/>
            <person name="Cohen G.N."/>
            <person name="Medigue C."/>
        </authorList>
    </citation>
    <scope>NUCLEOTIDE SEQUENCE [LARGE SCALE GENOMIC DNA]</scope>
    <source>
        <strain>ATCC 33305 / BD413 / ADP1</strain>
    </source>
</reference>
<reference key="2">
    <citation type="journal article" date="2008" name="J. Biol. Chem.">
        <title>New insights into the alternative D-glucarate degradation pathway.</title>
        <authorList>
            <person name="Aghaie A."/>
            <person name="Lechaplais C."/>
            <person name="Sirven P."/>
            <person name="Tricot S."/>
            <person name="Besnard-Gonnet M."/>
            <person name="Muselet D."/>
            <person name="de Berardinis V."/>
            <person name="Kreimeyer A."/>
            <person name="Gyapay G."/>
            <person name="Salanoubat M."/>
            <person name="Perret A."/>
        </authorList>
    </citation>
    <scope>FUNCTION</scope>
    <scope>PATHWAY</scope>
    <scope>CATALYTIC ACTIVITY</scope>
    <source>
        <strain>ATCC 33305 / BD413 / ADP1</strain>
    </source>
</reference>
<evidence type="ECO:0000250" key="1"/>
<evidence type="ECO:0000269" key="2">
    <source>
    </source>
</evidence>
<evidence type="ECO:0000305" key="3"/>
<sequence>MSENNGKQFINGQRVAANAPTIESINATDYQPTGYLFSQATLDEVDQAAQAAYQAFLKYQHTTQQQRADFLDEIAIQIENLGSKLQEVAAQETGLPLVRLQGETGRVTGQLRLFAELLRRGDFYGARIDTALPERKPLPRVDLRQYKIGVGPVAVFGASNFPLAFSTAGGDTVAALAAGCSVVFKAHSGHMATAELVAQAIEKAILNSGIPSGTFNMIFGSRVGANLVEHPLIQAAGFTGSLEGGMALFNLAQNRPQPIPFFAEMSSVNPVIVMPEALNARGEKVAQDTVASFNMGCGQFCTKPGLIIGIKSPAFDQFVTALIDTTRTAVPQIMLNQGTLKSYQQGIDALLNEQGFKCIASGQAPELISQAQPHLFQADQSVLLSGNPKLQHEVFGPMSIVIAVDDEATLLNGLEKLAGQLTATIIADESDLPQAKELLNLLTRKAGRVLFNGFPTGVEVSDAMVHGGPFPATSDSRGTSVGTGAIERFLRPVCYQNTSQVLLPDVLKDGNPLHITRLVNGVLTQN</sequence>